<sequence length="213" mass="24660">MGISLWLCPYGHSPEYETFKTLIESLQTLFPNSPVFEPHVTVCSGLSCENMEEVHKVLEMAHHAINAVKSKVDSENALVEFDGFNIGKKYFEKCRLECKPNPMLYSLAKLIRSMFVGELNIDTWLFEEFHPHLSLAYSDIYPMDQAMIRLIRQRIEDLFDVTTEEIESHSRDQDAYKLQHTLKGWSFPLTFKVVRCEGPVEEWEVLSEVTVHG</sequence>
<comment type="function">
    <text evidence="1">Involved in the metabolism of ADP-ribose 1',2'-cyclic phosphate which is produced as a consequence of tRNA splicing.</text>
</comment>
<comment type="catalytic activity">
    <reaction>
        <text>a nucleoside 2',3'-cyclic phosphate + H2O = a nucleoside 2'-phosphate + H(+)</text>
        <dbReference type="Rhea" id="RHEA:14489"/>
        <dbReference type="ChEBI" id="CHEBI:15377"/>
        <dbReference type="ChEBI" id="CHEBI:15378"/>
        <dbReference type="ChEBI" id="CHEBI:66954"/>
        <dbReference type="ChEBI" id="CHEBI:78552"/>
        <dbReference type="EC" id="3.1.4.37"/>
    </reaction>
</comment>
<comment type="subcellular location">
    <subcellularLocation>
        <location evidence="1">Golgi apparatus</location>
    </subcellularLocation>
</comment>
<comment type="similarity">
    <text evidence="2">Belongs to the 2H phosphoesterase superfamily. CPD1 family.</text>
</comment>
<proteinExistence type="inferred from homology"/>
<gene>
    <name type="primary">CPD1</name>
    <name type="ordered locus">KLLA0A05412g</name>
</gene>
<organism>
    <name type="scientific">Kluyveromyces lactis (strain ATCC 8585 / CBS 2359 / DSM 70799 / NBRC 1267 / NRRL Y-1140 / WM37)</name>
    <name type="common">Yeast</name>
    <name type="synonym">Candida sphaerica</name>
    <dbReference type="NCBI Taxonomy" id="284590"/>
    <lineage>
        <taxon>Eukaryota</taxon>
        <taxon>Fungi</taxon>
        <taxon>Dikarya</taxon>
        <taxon>Ascomycota</taxon>
        <taxon>Saccharomycotina</taxon>
        <taxon>Saccharomycetes</taxon>
        <taxon>Saccharomycetales</taxon>
        <taxon>Saccharomycetaceae</taxon>
        <taxon>Kluyveromyces</taxon>
    </lineage>
</organism>
<feature type="chain" id="PRO_0000280678" description="2',3'-cyclic-nucleotide 3'-phosphodiesterase">
    <location>
        <begin position="1"/>
        <end position="213"/>
    </location>
</feature>
<feature type="active site" description="Proton donor/acceptor" evidence="1">
    <location>
        <position position="39"/>
    </location>
</feature>
<feature type="active site" description="Proton donor/acceptor" evidence="1">
    <location>
        <position position="132"/>
    </location>
</feature>
<feature type="binding site" evidence="1">
    <location>
        <position position="41"/>
    </location>
    <ligand>
        <name>substrate</name>
    </ligand>
</feature>
<feature type="binding site" evidence="1">
    <location>
        <position position="134"/>
    </location>
    <ligand>
        <name>substrate</name>
    </ligand>
</feature>
<feature type="binding site" evidence="1">
    <location>
        <position position="137"/>
    </location>
    <ligand>
        <name>substrate</name>
    </ligand>
</feature>
<accession>Q6CXV0</accession>
<name>CPD1_KLULA</name>
<reference key="1">
    <citation type="journal article" date="2004" name="Nature">
        <title>Genome evolution in yeasts.</title>
        <authorList>
            <person name="Dujon B."/>
            <person name="Sherman D."/>
            <person name="Fischer G."/>
            <person name="Durrens P."/>
            <person name="Casaregola S."/>
            <person name="Lafontaine I."/>
            <person name="de Montigny J."/>
            <person name="Marck C."/>
            <person name="Neuveglise C."/>
            <person name="Talla E."/>
            <person name="Goffard N."/>
            <person name="Frangeul L."/>
            <person name="Aigle M."/>
            <person name="Anthouard V."/>
            <person name="Babour A."/>
            <person name="Barbe V."/>
            <person name="Barnay S."/>
            <person name="Blanchin S."/>
            <person name="Beckerich J.-M."/>
            <person name="Beyne E."/>
            <person name="Bleykasten C."/>
            <person name="Boisrame A."/>
            <person name="Boyer J."/>
            <person name="Cattolico L."/>
            <person name="Confanioleri F."/>
            <person name="de Daruvar A."/>
            <person name="Despons L."/>
            <person name="Fabre E."/>
            <person name="Fairhead C."/>
            <person name="Ferry-Dumazet H."/>
            <person name="Groppi A."/>
            <person name="Hantraye F."/>
            <person name="Hennequin C."/>
            <person name="Jauniaux N."/>
            <person name="Joyet P."/>
            <person name="Kachouri R."/>
            <person name="Kerrest A."/>
            <person name="Koszul R."/>
            <person name="Lemaire M."/>
            <person name="Lesur I."/>
            <person name="Ma L."/>
            <person name="Muller H."/>
            <person name="Nicaud J.-M."/>
            <person name="Nikolski M."/>
            <person name="Oztas S."/>
            <person name="Ozier-Kalogeropoulos O."/>
            <person name="Pellenz S."/>
            <person name="Potier S."/>
            <person name="Richard G.-F."/>
            <person name="Straub M.-L."/>
            <person name="Suleau A."/>
            <person name="Swennen D."/>
            <person name="Tekaia F."/>
            <person name="Wesolowski-Louvel M."/>
            <person name="Westhof E."/>
            <person name="Wirth B."/>
            <person name="Zeniou-Meyer M."/>
            <person name="Zivanovic Y."/>
            <person name="Bolotin-Fukuhara M."/>
            <person name="Thierry A."/>
            <person name="Bouchier C."/>
            <person name="Caudron B."/>
            <person name="Scarpelli C."/>
            <person name="Gaillardin C."/>
            <person name="Weissenbach J."/>
            <person name="Wincker P."/>
            <person name="Souciet J.-L."/>
        </authorList>
    </citation>
    <scope>NUCLEOTIDE SEQUENCE [LARGE SCALE GENOMIC DNA]</scope>
    <source>
        <strain>ATCC 8585 / CBS 2359 / DSM 70799 / NBRC 1267 / NRRL Y-1140 / WM37</strain>
    </source>
</reference>
<evidence type="ECO:0000250" key="1"/>
<evidence type="ECO:0000305" key="2"/>
<keyword id="KW-0333">Golgi apparatus</keyword>
<keyword id="KW-0378">Hydrolase</keyword>
<keyword id="KW-1185">Reference proteome</keyword>
<dbReference type="EC" id="3.1.4.37"/>
<dbReference type="EMBL" id="CR382121">
    <property type="protein sequence ID" value="CAH02827.1"/>
    <property type="molecule type" value="Genomic_DNA"/>
</dbReference>
<dbReference type="RefSeq" id="XP_451239.1">
    <property type="nucleotide sequence ID" value="XM_451239.1"/>
</dbReference>
<dbReference type="SMR" id="Q6CXV0"/>
<dbReference type="FunCoup" id="Q6CXV0">
    <property type="interactions" value="18"/>
</dbReference>
<dbReference type="STRING" id="284590.Q6CXV0"/>
<dbReference type="PaxDb" id="284590-Q6CXV0"/>
<dbReference type="KEGG" id="kla:KLLA0_A05412g"/>
<dbReference type="eggNOG" id="ENOG502RY6J">
    <property type="taxonomic scope" value="Eukaryota"/>
</dbReference>
<dbReference type="HOGENOM" id="CLU_088289_0_0_1"/>
<dbReference type="InParanoid" id="Q6CXV0"/>
<dbReference type="OMA" id="FEPHITI"/>
<dbReference type="Proteomes" id="UP000000598">
    <property type="component" value="Chromosome A"/>
</dbReference>
<dbReference type="GO" id="GO:0005794">
    <property type="term" value="C:Golgi apparatus"/>
    <property type="evidence" value="ECO:0007669"/>
    <property type="project" value="UniProtKB-SubCell"/>
</dbReference>
<dbReference type="GO" id="GO:0004113">
    <property type="term" value="F:2',3'-cyclic-nucleotide 3'-phosphodiesterase activity"/>
    <property type="evidence" value="ECO:0007669"/>
    <property type="project" value="UniProtKB-EC"/>
</dbReference>
<dbReference type="GO" id="GO:0009187">
    <property type="term" value="P:cyclic nucleotide metabolic process"/>
    <property type="evidence" value="ECO:0007669"/>
    <property type="project" value="TreeGrafter"/>
</dbReference>
<dbReference type="Gene3D" id="3.90.1140.10">
    <property type="entry name" value="Cyclic phosphodiesterase"/>
    <property type="match status" value="1"/>
</dbReference>
<dbReference type="InterPro" id="IPR012386">
    <property type="entry name" value="Cyclic-nucl_3Pdiesterase"/>
</dbReference>
<dbReference type="InterPro" id="IPR009097">
    <property type="entry name" value="Cyclic_Pdiesterase"/>
</dbReference>
<dbReference type="PANTHER" id="PTHR28141">
    <property type="entry name" value="2',3'-CYCLIC-NUCLEOTIDE 3'-PHOSPHODIESTERASE"/>
    <property type="match status" value="1"/>
</dbReference>
<dbReference type="PANTHER" id="PTHR28141:SF1">
    <property type="entry name" value="2',3'-CYCLIC-NUCLEOTIDE 3'-PHOSPHODIESTERASE"/>
    <property type="match status" value="1"/>
</dbReference>
<dbReference type="Pfam" id="PF07823">
    <property type="entry name" value="CPDase"/>
    <property type="match status" value="1"/>
</dbReference>
<dbReference type="SUPFAM" id="SSF55144">
    <property type="entry name" value="LigT-like"/>
    <property type="match status" value="1"/>
</dbReference>
<protein>
    <recommendedName>
        <fullName>2',3'-cyclic-nucleotide 3'-phosphodiesterase</fullName>
        <shortName>CPDase</shortName>
        <ecNumber>3.1.4.37</ecNumber>
    </recommendedName>
</protein>